<dbReference type="EMBL" id="CP000789">
    <property type="protein sequence ID" value="ABU69124.1"/>
    <property type="molecule type" value="Genomic_DNA"/>
</dbReference>
<dbReference type="RefSeq" id="WP_005451463.1">
    <property type="nucleotide sequence ID" value="NC_022269.1"/>
</dbReference>
<dbReference type="SMR" id="A7MXA2"/>
<dbReference type="KEGG" id="vha:VIBHAR_00064"/>
<dbReference type="PATRIC" id="fig|338187.25.peg.2459"/>
<dbReference type="Proteomes" id="UP000008152">
    <property type="component" value="Chromosome I"/>
</dbReference>
<dbReference type="Gene3D" id="1.20.5.300">
    <property type="match status" value="1"/>
</dbReference>
<dbReference type="HAMAP" id="MF_00715">
    <property type="entry name" value="SlyX"/>
    <property type="match status" value="1"/>
</dbReference>
<dbReference type="InterPro" id="IPR007236">
    <property type="entry name" value="SlyX"/>
</dbReference>
<dbReference type="NCBIfam" id="NF003357">
    <property type="entry name" value="PRK04406.1"/>
    <property type="match status" value="1"/>
</dbReference>
<dbReference type="PANTHER" id="PTHR36508">
    <property type="entry name" value="PROTEIN SLYX"/>
    <property type="match status" value="1"/>
</dbReference>
<dbReference type="PANTHER" id="PTHR36508:SF1">
    <property type="entry name" value="PROTEIN SLYX"/>
    <property type="match status" value="1"/>
</dbReference>
<dbReference type="Pfam" id="PF04102">
    <property type="entry name" value="SlyX"/>
    <property type="match status" value="1"/>
</dbReference>
<name>SLYX_VIBC1</name>
<comment type="similarity">
    <text evidence="1">Belongs to the SlyX family.</text>
</comment>
<accession>A7MXA2</accession>
<sequence length="75" mass="8565">MTDKIIQQLEARINDLECQLAFQEQTIEDLNGALSQQQLQITKMLDQMKYVVGKVKNMDSSNLADPSEETPPPHY</sequence>
<feature type="chain" id="PRO_1000045744" description="Protein SlyX homolog">
    <location>
        <begin position="1"/>
        <end position="75"/>
    </location>
</feature>
<evidence type="ECO:0000255" key="1">
    <source>
        <dbReference type="HAMAP-Rule" id="MF_00715"/>
    </source>
</evidence>
<reference key="1">
    <citation type="submission" date="2007-08" db="EMBL/GenBank/DDBJ databases">
        <authorList>
            <consortium name="The Vibrio harveyi Genome Sequencing Project"/>
            <person name="Bassler B."/>
            <person name="Clifton S.W."/>
            <person name="Fulton L."/>
            <person name="Delehaunty K."/>
            <person name="Fronick C."/>
            <person name="Harrison M."/>
            <person name="Markivic C."/>
            <person name="Fulton R."/>
            <person name="Tin-Wollam A.-M."/>
            <person name="Shah N."/>
            <person name="Pepin K."/>
            <person name="Nash W."/>
            <person name="Thiruvilangam P."/>
            <person name="Bhonagiri V."/>
            <person name="Waters C."/>
            <person name="Tu K.C."/>
            <person name="Irgon J."/>
            <person name="Wilson R.K."/>
        </authorList>
    </citation>
    <scope>NUCLEOTIDE SEQUENCE [LARGE SCALE GENOMIC DNA]</scope>
    <source>
        <strain>ATCC BAA-1116 / BB120</strain>
    </source>
</reference>
<proteinExistence type="inferred from homology"/>
<protein>
    <recommendedName>
        <fullName evidence="1">Protein SlyX homolog</fullName>
    </recommendedName>
</protein>
<gene>
    <name evidence="1" type="primary">slyX</name>
    <name type="ordered locus">VIBHAR_00064</name>
</gene>
<organism>
    <name type="scientific">Vibrio campbellii (strain ATCC BAA-1116)</name>
    <dbReference type="NCBI Taxonomy" id="2902295"/>
    <lineage>
        <taxon>Bacteria</taxon>
        <taxon>Pseudomonadati</taxon>
        <taxon>Pseudomonadota</taxon>
        <taxon>Gammaproteobacteria</taxon>
        <taxon>Vibrionales</taxon>
        <taxon>Vibrionaceae</taxon>
        <taxon>Vibrio</taxon>
    </lineage>
</organism>